<feature type="chain" id="PRO_1000086159" description="Small ribosomal subunit protein uS3">
    <location>
        <begin position="1"/>
        <end position="230"/>
    </location>
</feature>
<feature type="domain" description="KH type-2" evidence="1">
    <location>
        <begin position="39"/>
        <end position="107"/>
    </location>
</feature>
<name>RS3_SHEB9</name>
<reference key="1">
    <citation type="submission" date="2007-11" db="EMBL/GenBank/DDBJ databases">
        <title>Complete sequence of chromosome of Shewanella baltica OS195.</title>
        <authorList>
            <consortium name="US DOE Joint Genome Institute"/>
            <person name="Copeland A."/>
            <person name="Lucas S."/>
            <person name="Lapidus A."/>
            <person name="Barry K."/>
            <person name="Glavina del Rio T."/>
            <person name="Dalin E."/>
            <person name="Tice H."/>
            <person name="Pitluck S."/>
            <person name="Chain P."/>
            <person name="Malfatti S."/>
            <person name="Shin M."/>
            <person name="Vergez L."/>
            <person name="Schmutz J."/>
            <person name="Larimer F."/>
            <person name="Land M."/>
            <person name="Hauser L."/>
            <person name="Kyrpides N."/>
            <person name="Kim E."/>
            <person name="Brettar I."/>
            <person name="Rodrigues J."/>
            <person name="Konstantinidis K."/>
            <person name="Klappenbach J."/>
            <person name="Hofle M."/>
            <person name="Tiedje J."/>
            <person name="Richardson P."/>
        </authorList>
    </citation>
    <scope>NUCLEOTIDE SEQUENCE [LARGE SCALE GENOMIC DNA]</scope>
    <source>
        <strain>OS195</strain>
    </source>
</reference>
<accession>A9KWA8</accession>
<evidence type="ECO:0000255" key="1">
    <source>
        <dbReference type="HAMAP-Rule" id="MF_01309"/>
    </source>
</evidence>
<evidence type="ECO:0000305" key="2"/>
<organism>
    <name type="scientific">Shewanella baltica (strain OS195)</name>
    <dbReference type="NCBI Taxonomy" id="399599"/>
    <lineage>
        <taxon>Bacteria</taxon>
        <taxon>Pseudomonadati</taxon>
        <taxon>Pseudomonadota</taxon>
        <taxon>Gammaproteobacteria</taxon>
        <taxon>Alteromonadales</taxon>
        <taxon>Shewanellaceae</taxon>
        <taxon>Shewanella</taxon>
    </lineage>
</organism>
<dbReference type="EMBL" id="CP000891">
    <property type="protein sequence ID" value="ABX47388.1"/>
    <property type="molecule type" value="Genomic_DNA"/>
</dbReference>
<dbReference type="RefSeq" id="WP_006083594.1">
    <property type="nucleotide sequence ID" value="NC_009997.1"/>
</dbReference>
<dbReference type="SMR" id="A9KWA8"/>
<dbReference type="GeneID" id="11774508"/>
<dbReference type="KEGG" id="sbn:Sbal195_0206"/>
<dbReference type="HOGENOM" id="CLU_058591_0_2_6"/>
<dbReference type="Proteomes" id="UP000000770">
    <property type="component" value="Chromosome"/>
</dbReference>
<dbReference type="GO" id="GO:0022627">
    <property type="term" value="C:cytosolic small ribosomal subunit"/>
    <property type="evidence" value="ECO:0007669"/>
    <property type="project" value="TreeGrafter"/>
</dbReference>
<dbReference type="GO" id="GO:0003729">
    <property type="term" value="F:mRNA binding"/>
    <property type="evidence" value="ECO:0007669"/>
    <property type="project" value="UniProtKB-UniRule"/>
</dbReference>
<dbReference type="GO" id="GO:0019843">
    <property type="term" value="F:rRNA binding"/>
    <property type="evidence" value="ECO:0007669"/>
    <property type="project" value="UniProtKB-UniRule"/>
</dbReference>
<dbReference type="GO" id="GO:0003735">
    <property type="term" value="F:structural constituent of ribosome"/>
    <property type="evidence" value="ECO:0007669"/>
    <property type="project" value="InterPro"/>
</dbReference>
<dbReference type="GO" id="GO:0006412">
    <property type="term" value="P:translation"/>
    <property type="evidence" value="ECO:0007669"/>
    <property type="project" value="UniProtKB-UniRule"/>
</dbReference>
<dbReference type="CDD" id="cd02412">
    <property type="entry name" value="KH-II_30S_S3"/>
    <property type="match status" value="1"/>
</dbReference>
<dbReference type="FunFam" id="3.30.1140.32:FF:000001">
    <property type="entry name" value="30S ribosomal protein S3"/>
    <property type="match status" value="1"/>
</dbReference>
<dbReference type="FunFam" id="3.30.300.20:FF:000001">
    <property type="entry name" value="30S ribosomal protein S3"/>
    <property type="match status" value="1"/>
</dbReference>
<dbReference type="Gene3D" id="3.30.300.20">
    <property type="match status" value="1"/>
</dbReference>
<dbReference type="Gene3D" id="3.30.1140.32">
    <property type="entry name" value="Ribosomal protein S3, C-terminal domain"/>
    <property type="match status" value="1"/>
</dbReference>
<dbReference type="HAMAP" id="MF_01309_B">
    <property type="entry name" value="Ribosomal_uS3_B"/>
    <property type="match status" value="1"/>
</dbReference>
<dbReference type="InterPro" id="IPR004087">
    <property type="entry name" value="KH_dom"/>
</dbReference>
<dbReference type="InterPro" id="IPR015946">
    <property type="entry name" value="KH_dom-like_a/b"/>
</dbReference>
<dbReference type="InterPro" id="IPR004044">
    <property type="entry name" value="KH_dom_type_2"/>
</dbReference>
<dbReference type="InterPro" id="IPR009019">
    <property type="entry name" value="KH_sf_prok-type"/>
</dbReference>
<dbReference type="InterPro" id="IPR036419">
    <property type="entry name" value="Ribosomal_S3_C_sf"/>
</dbReference>
<dbReference type="InterPro" id="IPR005704">
    <property type="entry name" value="Ribosomal_uS3_bac-typ"/>
</dbReference>
<dbReference type="InterPro" id="IPR001351">
    <property type="entry name" value="Ribosomal_uS3_C"/>
</dbReference>
<dbReference type="InterPro" id="IPR018280">
    <property type="entry name" value="Ribosomal_uS3_CS"/>
</dbReference>
<dbReference type="NCBIfam" id="TIGR01009">
    <property type="entry name" value="rpsC_bact"/>
    <property type="match status" value="1"/>
</dbReference>
<dbReference type="PANTHER" id="PTHR11760">
    <property type="entry name" value="30S/40S RIBOSOMAL PROTEIN S3"/>
    <property type="match status" value="1"/>
</dbReference>
<dbReference type="PANTHER" id="PTHR11760:SF19">
    <property type="entry name" value="SMALL RIBOSOMAL SUBUNIT PROTEIN US3C"/>
    <property type="match status" value="1"/>
</dbReference>
<dbReference type="Pfam" id="PF07650">
    <property type="entry name" value="KH_2"/>
    <property type="match status" value="1"/>
</dbReference>
<dbReference type="Pfam" id="PF00189">
    <property type="entry name" value="Ribosomal_S3_C"/>
    <property type="match status" value="1"/>
</dbReference>
<dbReference type="SMART" id="SM00322">
    <property type="entry name" value="KH"/>
    <property type="match status" value="1"/>
</dbReference>
<dbReference type="SUPFAM" id="SSF54814">
    <property type="entry name" value="Prokaryotic type KH domain (KH-domain type II)"/>
    <property type="match status" value="1"/>
</dbReference>
<dbReference type="SUPFAM" id="SSF54821">
    <property type="entry name" value="Ribosomal protein S3 C-terminal domain"/>
    <property type="match status" value="1"/>
</dbReference>
<dbReference type="PROSITE" id="PS50823">
    <property type="entry name" value="KH_TYPE_2"/>
    <property type="match status" value="1"/>
</dbReference>
<dbReference type="PROSITE" id="PS00548">
    <property type="entry name" value="RIBOSOMAL_S3"/>
    <property type="match status" value="1"/>
</dbReference>
<sequence>MGQKVHPNGIRLGITKPWISTWYADKSDYASNLNSDWEVRKFLVEKLQAASVSKIVIERPAKSIRVTIHTARPGVVIGKKGEDVEVLRAAVSKLAGTPAQINIAEIRKPELDAKLVADSIAQQLERRVMFRRAMKRAVQNAMRIGAQGIKVQVSGRLGGAEIARDEWYREGRVPLHTLRADIDYSTSESHTQYGVIGVKVWIFKGEVLDGMLPQIEEPKQQQPKRKPRGK</sequence>
<gene>
    <name evidence="1" type="primary">rpsC</name>
    <name type="ordered locus">Sbal195_0206</name>
</gene>
<comment type="function">
    <text evidence="1">Binds the lower part of the 30S subunit head. Binds mRNA in the 70S ribosome, positioning it for translation.</text>
</comment>
<comment type="subunit">
    <text evidence="1">Part of the 30S ribosomal subunit. Forms a tight complex with proteins S10 and S14.</text>
</comment>
<comment type="similarity">
    <text evidence="1">Belongs to the universal ribosomal protein uS3 family.</text>
</comment>
<keyword id="KW-0687">Ribonucleoprotein</keyword>
<keyword id="KW-0689">Ribosomal protein</keyword>
<keyword id="KW-0694">RNA-binding</keyword>
<keyword id="KW-0699">rRNA-binding</keyword>
<proteinExistence type="inferred from homology"/>
<protein>
    <recommendedName>
        <fullName evidence="1">Small ribosomal subunit protein uS3</fullName>
    </recommendedName>
    <alternativeName>
        <fullName evidence="2">30S ribosomal protein S3</fullName>
    </alternativeName>
</protein>